<organism>
    <name type="scientific">Equine herpesvirus 1 (strain Ab4p)</name>
    <name type="common">EHV-1</name>
    <name type="synonym">Equine abortion virus</name>
    <dbReference type="NCBI Taxonomy" id="31520"/>
    <lineage>
        <taxon>Viruses</taxon>
        <taxon>Duplodnaviria</taxon>
        <taxon>Heunggongvirae</taxon>
        <taxon>Peploviricota</taxon>
        <taxon>Herviviricetes</taxon>
        <taxon>Herpesvirales</taxon>
        <taxon>Orthoherpesviridae</taxon>
        <taxon>Alphaherpesvirinae</taxon>
        <taxon>Varicellovirus</taxon>
        <taxon>Varicellovirus equidalpha1</taxon>
        <taxon>Equid alphaherpesvirus 1</taxon>
    </lineage>
</organism>
<keyword id="KW-1035">Host cytoplasm</keyword>
<keyword id="KW-1040">Host Golgi apparatus</keyword>
<keyword id="KW-0449">Lipoprotein</keyword>
<keyword id="KW-0564">Palmitate</keyword>
<keyword id="KW-0597">Phosphoprotein</keyword>
<keyword id="KW-1185">Reference proteome</keyword>
<keyword id="KW-0946">Virion</keyword>
<keyword id="KW-0920">Virion tegument</keyword>
<accession>P28961</accession>
<accession>Q6DLK3</accession>
<gene>
    <name type="ordered locus">8</name>
</gene>
<name>TEG7_EHV1B</name>
<comment type="function">
    <text evidence="1">Plays several roles during the time course of infection, including egress of virus particles from the perinuclear space and secondary envelopment of cytoplasmic capsids that bud into specific trans-Golgi network (TGN)-derived membranes.</text>
</comment>
<comment type="subunit">
    <text evidence="1 2">Oligomerizes. Interacts with ORF55; this interaction mediates ORF55 incorporation to virions.</text>
</comment>
<comment type="subcellular location">
    <subcellularLocation>
        <location evidence="1">Virion tegument</location>
    </subcellularLocation>
    <subcellularLocation>
        <location evidence="1">Host cytoplasm</location>
    </subcellularLocation>
    <subcellularLocation>
        <location evidence="1">Host Golgi apparatus</location>
    </subcellularLocation>
</comment>
<comment type="PTM">
    <text evidence="1">Phosphorylated.</text>
</comment>
<comment type="PTM">
    <text evidence="1">Palmitoylation is necessary for Golgi localization.</text>
</comment>
<comment type="similarity">
    <text evidence="4">Belongs to the herpesviridae UL51 family.</text>
</comment>
<evidence type="ECO:0000250" key="1">
    <source>
        <dbReference type="UniProtKB" id="P10235"/>
    </source>
</evidence>
<evidence type="ECO:0000250" key="2">
    <source>
        <dbReference type="UniProtKB" id="P16823"/>
    </source>
</evidence>
<evidence type="ECO:0000256" key="3">
    <source>
        <dbReference type="SAM" id="MobiDB-lite"/>
    </source>
</evidence>
<evidence type="ECO:0000305" key="4"/>
<protein>
    <recommendedName>
        <fullName>Tegument protein UL51 homolog</fullName>
    </recommendedName>
</protein>
<reference key="1">
    <citation type="journal article" date="1992" name="Virology">
        <title>The DNA sequence of equine herpesvirus-1.</title>
        <authorList>
            <person name="Telford E.A.R."/>
            <person name="Watson M.S."/>
            <person name="McBride K."/>
            <person name="Davison A.J."/>
        </authorList>
    </citation>
    <scope>NUCLEOTIDE SEQUENCE [LARGE SCALE GENOMIC DNA]</scope>
</reference>
<feature type="chain" id="PRO_0000116100" description="Tegument protein UL51 homolog">
    <location>
        <begin position="1"/>
        <end position="245"/>
    </location>
</feature>
<feature type="region of interest" description="Disordered" evidence="3">
    <location>
        <begin position="225"/>
        <end position="245"/>
    </location>
</feature>
<feature type="compositionally biased region" description="Basic residues" evidence="3">
    <location>
        <begin position="230"/>
        <end position="245"/>
    </location>
</feature>
<feature type="lipid moiety-binding region" description="S-palmitoyl cysteine; by host" evidence="1">
    <location>
        <position position="10"/>
    </location>
</feature>
<proteinExistence type="inferred from homology"/>
<organismHost>
    <name type="scientific">Equus caballus</name>
    <name type="common">Horse</name>
    <dbReference type="NCBI Taxonomy" id="9796"/>
</organismHost>
<sequence length="245" mass="26365">MFKWLMSSLCGIRNSTSPEVYEPIIGGQNPATMLRLQSALAAVNALLPATLTIEDVISSADNTRRLVKAQTLARTYQACQHNIECLSRHRASSDNPNLNAVVTTHMINAKRLSDTCLAALMHLYLSVGAVDATTDTMVDHAIRMTAENSVVMADVAVLEKTLGLDPQATVRAQDLLALNSGVLNSVNAVAEMTDPTDDVEFTQSVHSPLLPRQLSTTEVVGVPSPVKSNLKSKHKPKRKASLVAV</sequence>
<dbReference type="EMBL" id="AY665713">
    <property type="protein sequence ID" value="AAT67265.1"/>
    <property type="molecule type" value="Genomic_DNA"/>
</dbReference>
<dbReference type="PIR" id="I36795">
    <property type="entry name" value="WZBEA7"/>
</dbReference>
<dbReference type="SMR" id="P28961"/>
<dbReference type="KEGG" id="vg:1487563"/>
<dbReference type="Proteomes" id="UP000001189">
    <property type="component" value="Segment"/>
</dbReference>
<dbReference type="GO" id="GO:0044177">
    <property type="term" value="C:host cell Golgi apparatus"/>
    <property type="evidence" value="ECO:0007669"/>
    <property type="project" value="UniProtKB-SubCell"/>
</dbReference>
<dbReference type="GO" id="GO:0019033">
    <property type="term" value="C:viral tegument"/>
    <property type="evidence" value="ECO:0007669"/>
    <property type="project" value="UniProtKB-SubCell"/>
</dbReference>
<dbReference type="InterPro" id="IPR007625">
    <property type="entry name" value="Herpes_UL51"/>
</dbReference>
<dbReference type="Pfam" id="PF04540">
    <property type="entry name" value="Herpes_UL51"/>
    <property type="match status" value="1"/>
</dbReference>